<proteinExistence type="evidence at transcript level"/>
<protein>
    <recommendedName>
        <fullName>Lysine-rich coiled-coil protein 1</fullName>
    </recommendedName>
</protein>
<accession>Q5PPL1</accession>
<reference key="1">
    <citation type="journal article" date="2004" name="Genome Res.">
        <title>The status, quality, and expansion of the NIH full-length cDNA project: the Mammalian Gene Collection (MGC).</title>
        <authorList>
            <consortium name="The MGC Project Team"/>
        </authorList>
    </citation>
    <scope>NUCLEOTIDE SEQUENCE [LARGE SCALE MRNA]</scope>
    <source>
        <tissue>Brain</tissue>
    </source>
</reference>
<evidence type="ECO:0000255" key="1"/>
<evidence type="ECO:0000256" key="2">
    <source>
        <dbReference type="SAM" id="MobiDB-lite"/>
    </source>
</evidence>
<dbReference type="EMBL" id="BC087628">
    <property type="protein sequence ID" value="AAH87628.1"/>
    <property type="molecule type" value="mRNA"/>
</dbReference>
<dbReference type="RefSeq" id="NP_001009413.1">
    <property type="nucleotide sequence ID" value="NM_001009413.2"/>
</dbReference>
<dbReference type="RefSeq" id="NP_001380979.1">
    <property type="nucleotide sequence ID" value="NM_001394050.1"/>
</dbReference>
<dbReference type="RefSeq" id="XP_006236698.1">
    <property type="nucleotide sequence ID" value="XM_006236636.3"/>
</dbReference>
<dbReference type="RefSeq" id="XP_008761202.1">
    <property type="nucleotide sequence ID" value="XM_008762980.2"/>
</dbReference>
<dbReference type="FunCoup" id="Q5PPL1">
    <property type="interactions" value="197"/>
</dbReference>
<dbReference type="STRING" id="10116.ENSRNOP00000009327"/>
<dbReference type="PhosphoSitePlus" id="Q5PPL1"/>
<dbReference type="PaxDb" id="10116-ENSRNOP00000009327"/>
<dbReference type="Ensembl" id="ENSRNOT00000009327.7">
    <property type="protein sequence ID" value="ENSRNOP00000009327.3"/>
    <property type="gene ID" value="ENSRNOG00000007124.7"/>
</dbReference>
<dbReference type="Ensembl" id="ENSRNOT00000094782.1">
    <property type="protein sequence ID" value="ENSRNOP00000086295.1"/>
    <property type="gene ID" value="ENSRNOG00000007124.7"/>
</dbReference>
<dbReference type="Ensembl" id="ENSRNOT00000103748.1">
    <property type="protein sequence ID" value="ENSRNOP00000093297.1"/>
    <property type="gene ID" value="ENSRNOG00000007124.7"/>
</dbReference>
<dbReference type="Ensembl" id="ENSRNOT00000103952.1">
    <property type="protein sequence ID" value="ENSRNOP00000097249.1"/>
    <property type="gene ID" value="ENSRNOG00000007124.7"/>
</dbReference>
<dbReference type="Ensembl" id="ENSRNOT00000114592.1">
    <property type="protein sequence ID" value="ENSRNOP00000087307.1"/>
    <property type="gene ID" value="ENSRNOG00000007124.7"/>
</dbReference>
<dbReference type="Ensembl" id="ENSRNOT00000118551.1">
    <property type="protein sequence ID" value="ENSRNOP00000078695.1"/>
    <property type="gene ID" value="ENSRNOG00000007124.7"/>
</dbReference>
<dbReference type="GeneID" id="312437"/>
<dbReference type="KEGG" id="rno:312437"/>
<dbReference type="UCSC" id="RGD:1306495">
    <property type="organism name" value="rat"/>
</dbReference>
<dbReference type="AGR" id="RGD:1306495"/>
<dbReference type="CTD" id="51315"/>
<dbReference type="RGD" id="1306495">
    <property type="gene designation" value="Krcc1"/>
</dbReference>
<dbReference type="eggNOG" id="ENOG502RTYF">
    <property type="taxonomic scope" value="Eukaryota"/>
</dbReference>
<dbReference type="GeneTree" id="ENSGT00940000162565"/>
<dbReference type="HOGENOM" id="CLU_032533_0_0_1"/>
<dbReference type="InParanoid" id="Q5PPL1"/>
<dbReference type="OMA" id="ASHKQTH"/>
<dbReference type="OrthoDB" id="9747435at2759"/>
<dbReference type="PhylomeDB" id="Q5PPL1"/>
<dbReference type="PRO" id="PR:Q5PPL1"/>
<dbReference type="Proteomes" id="UP000002494">
    <property type="component" value="Chromosome 4"/>
</dbReference>
<dbReference type="Bgee" id="ENSRNOG00000007124">
    <property type="expression patterns" value="Expressed in duodenum and 20 other cell types or tissues"/>
</dbReference>
<dbReference type="PANTHER" id="PTHR46742">
    <property type="entry name" value="LYSINE-RICH COILED-COIL PROTEIN 1"/>
    <property type="match status" value="1"/>
</dbReference>
<dbReference type="PANTHER" id="PTHR46742:SF3">
    <property type="entry name" value="LYSINE-RICH COILED-COIL PROTEIN 1"/>
    <property type="match status" value="1"/>
</dbReference>
<keyword id="KW-0175">Coiled coil</keyword>
<keyword id="KW-1185">Reference proteome</keyword>
<name>KRCC1_RAT</name>
<gene>
    <name type="primary">Krcc1</name>
</gene>
<feature type="chain" id="PRO_0000306399" description="Lysine-rich coiled-coil protein 1">
    <location>
        <begin position="1"/>
        <end position="256"/>
    </location>
</feature>
<feature type="region of interest" description="Disordered" evidence="2">
    <location>
        <begin position="61"/>
        <end position="83"/>
    </location>
</feature>
<feature type="region of interest" description="Disordered" evidence="2">
    <location>
        <begin position="141"/>
        <end position="256"/>
    </location>
</feature>
<feature type="coiled-coil region" evidence="1">
    <location>
        <begin position="208"/>
        <end position="247"/>
    </location>
</feature>
<feature type="compositionally biased region" description="Polar residues" evidence="2">
    <location>
        <begin position="64"/>
        <end position="79"/>
    </location>
</feature>
<feature type="compositionally biased region" description="Polar residues" evidence="2">
    <location>
        <begin position="141"/>
        <end position="153"/>
    </location>
</feature>
<feature type="compositionally biased region" description="Basic and acidic residues" evidence="2">
    <location>
        <begin position="161"/>
        <end position="188"/>
    </location>
</feature>
<feature type="compositionally biased region" description="Basic and acidic residues" evidence="2">
    <location>
        <begin position="218"/>
        <end position="227"/>
    </location>
</feature>
<organism>
    <name type="scientific">Rattus norvegicus</name>
    <name type="common">Rat</name>
    <dbReference type="NCBI Taxonomy" id="10116"/>
    <lineage>
        <taxon>Eukaryota</taxon>
        <taxon>Metazoa</taxon>
        <taxon>Chordata</taxon>
        <taxon>Craniata</taxon>
        <taxon>Vertebrata</taxon>
        <taxon>Euteleostomi</taxon>
        <taxon>Mammalia</taxon>
        <taxon>Eutheria</taxon>
        <taxon>Euarchontoglires</taxon>
        <taxon>Glires</taxon>
        <taxon>Rodentia</taxon>
        <taxon>Myomorpha</taxon>
        <taxon>Muroidea</taxon>
        <taxon>Muridae</taxon>
        <taxon>Murinae</taxon>
        <taxon>Rattus</taxon>
    </lineage>
</organism>
<sequence length="256" mass="30703">MKHSNKPYDSFQDELEDYIKVQKARGLEPKTCFRRMRGEYLESCGYREEFDSRPRYRMFDQRIPSGTNHSYPRSCSSSQTEDRVPQWLPAHDKIRLNSLNYCQFTRDGFSEKPVSLNLSQQEYNCGSYSVESVVHKDLCSGHSTIDPQVSHRQMYQKRKRHLEEGRERQEERPKHERKRSSEEMDLNKHKSIQRKKTKAETETVQDGTEKLKNRKEKKNRDVSSKKEDRKRRKEKKEQGEERTEEEMLWDQSILGF</sequence>